<feature type="chain" id="PRO_0000376230" description="NADH-quinone oxidoreductase subunit B">
    <location>
        <begin position="1"/>
        <end position="158"/>
    </location>
</feature>
<feature type="binding site" evidence="1">
    <location>
        <position position="36"/>
    </location>
    <ligand>
        <name>[4Fe-4S] cluster</name>
        <dbReference type="ChEBI" id="CHEBI:49883"/>
    </ligand>
</feature>
<feature type="binding site" evidence="1">
    <location>
        <position position="37"/>
    </location>
    <ligand>
        <name>[4Fe-4S] cluster</name>
        <dbReference type="ChEBI" id="CHEBI:49883"/>
    </ligand>
</feature>
<feature type="binding site" evidence="1">
    <location>
        <position position="101"/>
    </location>
    <ligand>
        <name>[4Fe-4S] cluster</name>
        <dbReference type="ChEBI" id="CHEBI:49883"/>
    </ligand>
</feature>
<feature type="binding site" evidence="1">
    <location>
        <position position="131"/>
    </location>
    <ligand>
        <name>[4Fe-4S] cluster</name>
        <dbReference type="ChEBI" id="CHEBI:49883"/>
    </ligand>
</feature>
<organism>
    <name type="scientific">Francisella tularensis subsp. novicida (strain U112)</name>
    <dbReference type="NCBI Taxonomy" id="401614"/>
    <lineage>
        <taxon>Bacteria</taxon>
        <taxon>Pseudomonadati</taxon>
        <taxon>Pseudomonadota</taxon>
        <taxon>Gammaproteobacteria</taxon>
        <taxon>Thiotrichales</taxon>
        <taxon>Francisellaceae</taxon>
        <taxon>Francisella</taxon>
    </lineage>
</organism>
<gene>
    <name evidence="1" type="primary">nuoB</name>
    <name type="ordered locus">FTN_1679</name>
</gene>
<comment type="function">
    <text evidence="1">NDH-1 shuttles electrons from NADH, via FMN and iron-sulfur (Fe-S) centers, to quinones in the respiratory chain. The immediate electron acceptor for the enzyme in this species is believed to be ubiquinone. Couples the redox reaction to proton translocation (for every two electrons transferred, four hydrogen ions are translocated across the cytoplasmic membrane), and thus conserves the redox energy in a proton gradient.</text>
</comment>
<comment type="catalytic activity">
    <reaction evidence="1">
        <text>a quinone + NADH + 5 H(+)(in) = a quinol + NAD(+) + 4 H(+)(out)</text>
        <dbReference type="Rhea" id="RHEA:57888"/>
        <dbReference type="ChEBI" id="CHEBI:15378"/>
        <dbReference type="ChEBI" id="CHEBI:24646"/>
        <dbReference type="ChEBI" id="CHEBI:57540"/>
        <dbReference type="ChEBI" id="CHEBI:57945"/>
        <dbReference type="ChEBI" id="CHEBI:132124"/>
    </reaction>
</comment>
<comment type="cofactor">
    <cofactor evidence="1">
        <name>[4Fe-4S] cluster</name>
        <dbReference type="ChEBI" id="CHEBI:49883"/>
    </cofactor>
    <text evidence="1">Binds 1 [4Fe-4S] cluster.</text>
</comment>
<comment type="subunit">
    <text evidence="1">NDH-1 is composed of 14 different subunits. Subunits NuoB, C, D, E, F, and G constitute the peripheral sector of the complex.</text>
</comment>
<comment type="subcellular location">
    <subcellularLocation>
        <location evidence="1">Cell inner membrane</location>
        <topology evidence="1">Peripheral membrane protein</topology>
        <orientation evidence="1">Cytoplasmic side</orientation>
    </subcellularLocation>
</comment>
<comment type="similarity">
    <text evidence="1">Belongs to the complex I 20 kDa subunit family.</text>
</comment>
<dbReference type="EC" id="7.1.1.-" evidence="1"/>
<dbReference type="EMBL" id="CP000439">
    <property type="protein sequence ID" value="ABK90536.1"/>
    <property type="molecule type" value="Genomic_DNA"/>
</dbReference>
<dbReference type="RefSeq" id="WP_003017394.1">
    <property type="nucleotide sequence ID" value="NZ_CP009633.1"/>
</dbReference>
<dbReference type="SMR" id="A0Q8H1"/>
<dbReference type="KEGG" id="ftn:FTN_1679"/>
<dbReference type="KEGG" id="ftx:AW25_309"/>
<dbReference type="BioCyc" id="FTUL401614:G1G75-1739-MONOMER"/>
<dbReference type="Proteomes" id="UP000000762">
    <property type="component" value="Chromosome"/>
</dbReference>
<dbReference type="GO" id="GO:0005886">
    <property type="term" value="C:plasma membrane"/>
    <property type="evidence" value="ECO:0007669"/>
    <property type="project" value="UniProtKB-SubCell"/>
</dbReference>
<dbReference type="GO" id="GO:0045271">
    <property type="term" value="C:respiratory chain complex I"/>
    <property type="evidence" value="ECO:0007669"/>
    <property type="project" value="TreeGrafter"/>
</dbReference>
<dbReference type="GO" id="GO:0051539">
    <property type="term" value="F:4 iron, 4 sulfur cluster binding"/>
    <property type="evidence" value="ECO:0007669"/>
    <property type="project" value="UniProtKB-KW"/>
</dbReference>
<dbReference type="GO" id="GO:0005506">
    <property type="term" value="F:iron ion binding"/>
    <property type="evidence" value="ECO:0007669"/>
    <property type="project" value="UniProtKB-UniRule"/>
</dbReference>
<dbReference type="GO" id="GO:0008137">
    <property type="term" value="F:NADH dehydrogenase (ubiquinone) activity"/>
    <property type="evidence" value="ECO:0007669"/>
    <property type="project" value="InterPro"/>
</dbReference>
<dbReference type="GO" id="GO:0050136">
    <property type="term" value="F:NADH:ubiquinone reductase (non-electrogenic) activity"/>
    <property type="evidence" value="ECO:0007669"/>
    <property type="project" value="UniProtKB-UniRule"/>
</dbReference>
<dbReference type="GO" id="GO:0048038">
    <property type="term" value="F:quinone binding"/>
    <property type="evidence" value="ECO:0007669"/>
    <property type="project" value="UniProtKB-KW"/>
</dbReference>
<dbReference type="GO" id="GO:0009060">
    <property type="term" value="P:aerobic respiration"/>
    <property type="evidence" value="ECO:0007669"/>
    <property type="project" value="TreeGrafter"/>
</dbReference>
<dbReference type="GO" id="GO:0015990">
    <property type="term" value="P:electron transport coupled proton transport"/>
    <property type="evidence" value="ECO:0007669"/>
    <property type="project" value="TreeGrafter"/>
</dbReference>
<dbReference type="FunFam" id="3.40.50.12280:FF:000001">
    <property type="entry name" value="NADH-quinone oxidoreductase subunit B 2"/>
    <property type="match status" value="1"/>
</dbReference>
<dbReference type="Gene3D" id="3.40.50.12280">
    <property type="match status" value="1"/>
</dbReference>
<dbReference type="HAMAP" id="MF_01356">
    <property type="entry name" value="NDH1_NuoB"/>
    <property type="match status" value="1"/>
</dbReference>
<dbReference type="InterPro" id="IPR006137">
    <property type="entry name" value="NADH_UbQ_OxRdtase-like_20kDa"/>
</dbReference>
<dbReference type="InterPro" id="IPR006138">
    <property type="entry name" value="NADH_UQ_OxRdtase_20Kd_su"/>
</dbReference>
<dbReference type="NCBIfam" id="TIGR01957">
    <property type="entry name" value="nuoB_fam"/>
    <property type="match status" value="1"/>
</dbReference>
<dbReference type="NCBIfam" id="NF005012">
    <property type="entry name" value="PRK06411.1"/>
    <property type="match status" value="1"/>
</dbReference>
<dbReference type="PANTHER" id="PTHR11995">
    <property type="entry name" value="NADH DEHYDROGENASE"/>
    <property type="match status" value="1"/>
</dbReference>
<dbReference type="PANTHER" id="PTHR11995:SF14">
    <property type="entry name" value="NADH DEHYDROGENASE [UBIQUINONE] IRON-SULFUR PROTEIN 7, MITOCHONDRIAL"/>
    <property type="match status" value="1"/>
</dbReference>
<dbReference type="Pfam" id="PF01058">
    <property type="entry name" value="Oxidored_q6"/>
    <property type="match status" value="1"/>
</dbReference>
<dbReference type="SUPFAM" id="SSF56770">
    <property type="entry name" value="HydA/Nqo6-like"/>
    <property type="match status" value="1"/>
</dbReference>
<dbReference type="PROSITE" id="PS01150">
    <property type="entry name" value="COMPLEX1_20K"/>
    <property type="match status" value="1"/>
</dbReference>
<keyword id="KW-0004">4Fe-4S</keyword>
<keyword id="KW-0997">Cell inner membrane</keyword>
<keyword id="KW-1003">Cell membrane</keyword>
<keyword id="KW-0408">Iron</keyword>
<keyword id="KW-0411">Iron-sulfur</keyword>
<keyword id="KW-0472">Membrane</keyword>
<keyword id="KW-0479">Metal-binding</keyword>
<keyword id="KW-0520">NAD</keyword>
<keyword id="KW-0874">Quinone</keyword>
<keyword id="KW-1278">Translocase</keyword>
<keyword id="KW-0813">Transport</keyword>
<keyword id="KW-0830">Ubiquinone</keyword>
<proteinExistence type="inferred from homology"/>
<name>NUOB_FRATN</name>
<reference key="1">
    <citation type="journal article" date="2007" name="Genome Biol.">
        <title>Comparison of Francisella tularensis genomes reveals evolutionary events associated with the emergence of human pathogenic strains.</title>
        <authorList>
            <person name="Rohmer L."/>
            <person name="Fong C."/>
            <person name="Abmayr S."/>
            <person name="Wasnick M."/>
            <person name="Larson Freeman T.J."/>
            <person name="Radey M."/>
            <person name="Guina T."/>
            <person name="Svensson K."/>
            <person name="Hayden H.S."/>
            <person name="Jacobs M."/>
            <person name="Gallagher L.A."/>
            <person name="Manoil C."/>
            <person name="Ernst R.K."/>
            <person name="Drees B."/>
            <person name="Buckley D."/>
            <person name="Haugen E."/>
            <person name="Bovee D."/>
            <person name="Zhou Y."/>
            <person name="Chang J."/>
            <person name="Levy R."/>
            <person name="Lim R."/>
            <person name="Gillett W."/>
            <person name="Guenthener D."/>
            <person name="Kang A."/>
            <person name="Shaffer S.A."/>
            <person name="Taylor G."/>
            <person name="Chen J."/>
            <person name="Gallis B."/>
            <person name="D'Argenio D.A."/>
            <person name="Forsman M."/>
            <person name="Olson M.V."/>
            <person name="Goodlett D.R."/>
            <person name="Kaul R."/>
            <person name="Miller S.I."/>
            <person name="Brittnacher M.J."/>
        </authorList>
    </citation>
    <scope>NUCLEOTIDE SEQUENCE [LARGE SCALE GENOMIC DNA]</scope>
    <source>
        <strain>U112</strain>
    </source>
</reference>
<sequence length="158" mass="17258">MGIGNENKGFITASADALINWVRTGSLWPVTTGLACCAVEMMHAGAARYDLDRFGIVFRPSPRQSDVLIVAGTLCNKMAPALRQVYDQMPDPKWVISMGSCANGGGYYHYSYSVVRGCDRIVPVDIYVPGCPPTAEALVYGIIQLQNKIIRKDTIARK</sequence>
<protein>
    <recommendedName>
        <fullName evidence="1">NADH-quinone oxidoreductase subunit B</fullName>
        <ecNumber evidence="1">7.1.1.-</ecNumber>
    </recommendedName>
    <alternativeName>
        <fullName evidence="1">NADH dehydrogenase I subunit B</fullName>
    </alternativeName>
    <alternativeName>
        <fullName evidence="1">NDH-1 subunit B</fullName>
    </alternativeName>
</protein>
<evidence type="ECO:0000255" key="1">
    <source>
        <dbReference type="HAMAP-Rule" id="MF_01356"/>
    </source>
</evidence>
<accession>A0Q8H1</accession>